<reference key="1">
    <citation type="journal article" date="2006" name="Nature">
        <title>DNA sequence of human chromosome 17 and analysis of rearrangement in the human lineage.</title>
        <authorList>
            <person name="Zody M.C."/>
            <person name="Garber M."/>
            <person name="Adams D.J."/>
            <person name="Sharpe T."/>
            <person name="Harrow J."/>
            <person name="Lupski J.R."/>
            <person name="Nicholson C."/>
            <person name="Searle S.M."/>
            <person name="Wilming L."/>
            <person name="Young S.K."/>
            <person name="Abouelleil A."/>
            <person name="Allen N.R."/>
            <person name="Bi W."/>
            <person name="Bloom T."/>
            <person name="Borowsky M.L."/>
            <person name="Bugalter B.E."/>
            <person name="Butler J."/>
            <person name="Chang J.L."/>
            <person name="Chen C.-K."/>
            <person name="Cook A."/>
            <person name="Corum B."/>
            <person name="Cuomo C.A."/>
            <person name="de Jong P.J."/>
            <person name="DeCaprio D."/>
            <person name="Dewar K."/>
            <person name="FitzGerald M."/>
            <person name="Gilbert J."/>
            <person name="Gibson R."/>
            <person name="Gnerre S."/>
            <person name="Goldstein S."/>
            <person name="Grafham D.V."/>
            <person name="Grocock R."/>
            <person name="Hafez N."/>
            <person name="Hagopian D.S."/>
            <person name="Hart E."/>
            <person name="Norman C.H."/>
            <person name="Humphray S."/>
            <person name="Jaffe D.B."/>
            <person name="Jones M."/>
            <person name="Kamal M."/>
            <person name="Khodiyar V.K."/>
            <person name="LaButti K."/>
            <person name="Laird G."/>
            <person name="Lehoczky J."/>
            <person name="Liu X."/>
            <person name="Lokyitsang T."/>
            <person name="Loveland J."/>
            <person name="Lui A."/>
            <person name="Macdonald P."/>
            <person name="Major J.E."/>
            <person name="Matthews L."/>
            <person name="Mauceli E."/>
            <person name="McCarroll S.A."/>
            <person name="Mihalev A.H."/>
            <person name="Mudge J."/>
            <person name="Nguyen C."/>
            <person name="Nicol R."/>
            <person name="O'Leary S.B."/>
            <person name="Osoegawa K."/>
            <person name="Schwartz D.C."/>
            <person name="Shaw-Smith C."/>
            <person name="Stankiewicz P."/>
            <person name="Steward C."/>
            <person name="Swarbreck D."/>
            <person name="Venkataraman V."/>
            <person name="Whittaker C.A."/>
            <person name="Yang X."/>
            <person name="Zimmer A.R."/>
            <person name="Bradley A."/>
            <person name="Hubbard T."/>
            <person name="Birren B.W."/>
            <person name="Rogers J."/>
            <person name="Lander E.S."/>
            <person name="Nusbaum C."/>
        </authorList>
    </citation>
    <scope>NUCLEOTIDE SEQUENCE [LARGE SCALE GENOMIC DNA]</scope>
</reference>
<sequence>MGLKGAWCFPWCGCRRQRGTERGAGLSPAAPPDPSPAIAPTMAEGGVPSPGPGAYFSRKARLSFRHQLHDIASANDSTI</sequence>
<gene>
    <name evidence="2" type="primary">C17orf114</name>
</gene>
<keyword id="KW-1185">Reference proteome</keyword>
<dbReference type="EMBL" id="AC233723">
    <property type="status" value="NOT_ANNOTATED_CDS"/>
    <property type="molecule type" value="Genomic_DNA"/>
</dbReference>
<dbReference type="CCDS" id="CCDS92230.1"/>
<dbReference type="RefSeq" id="NP_001382152.1">
    <property type="nucleotide sequence ID" value="NM_001395223.2"/>
</dbReference>
<dbReference type="GlyGen" id="A0A1B0GUV1">
    <property type="glycosylation" value="1 site"/>
</dbReference>
<dbReference type="BioMuta" id="ENSG00000262165"/>
<dbReference type="Ensembl" id="ENST00000635921.2">
    <property type="protein sequence ID" value="ENSP00000490255.1"/>
    <property type="gene ID" value="ENSG00000262165.2"/>
</dbReference>
<dbReference type="GeneID" id="119139905"/>
<dbReference type="MANE-Select" id="ENST00000635921.2">
    <property type="protein sequence ID" value="ENSP00000490255.1"/>
    <property type="RefSeq nucleotide sequence ID" value="NM_001395223.2"/>
    <property type="RefSeq protein sequence ID" value="NP_001382152.1"/>
</dbReference>
<dbReference type="AGR" id="HGNC:55343"/>
<dbReference type="GeneCards" id="C17orf114"/>
<dbReference type="HGNC" id="HGNC:55343">
    <property type="gene designation" value="C17orf114"/>
</dbReference>
<dbReference type="HPA" id="ENSG00000262165">
    <property type="expression patterns" value="Tissue enhanced (brain)"/>
</dbReference>
<dbReference type="neXtProt" id="NX_A0A1B0GUV1"/>
<dbReference type="VEuPathDB" id="HostDB:ENSG00000262165"/>
<dbReference type="GeneTree" id="ENSGT00850000133648"/>
<dbReference type="InParanoid" id="A0A1B0GUV1"/>
<dbReference type="OMA" id="HQLHDMA"/>
<dbReference type="OrthoDB" id="8786528at2759"/>
<dbReference type="PAN-GO" id="A0A1B0GUV1">
    <property type="GO annotations" value="0 GO annotations based on evolutionary models"/>
</dbReference>
<dbReference type="PRO" id="PR:A0A1B0GUV1"/>
<dbReference type="Proteomes" id="UP000005640">
    <property type="component" value="Chromosome 17"/>
</dbReference>
<dbReference type="RNAct" id="A0A1B0GUV1">
    <property type="molecule type" value="protein"/>
</dbReference>
<dbReference type="Bgee" id="ENSG00000262165">
    <property type="expression patterns" value="Expressed in male germ line stem cell (sensu Vertebrata) in testis and 92 other cell types or tissues"/>
</dbReference>
<evidence type="ECO:0000256" key="1">
    <source>
        <dbReference type="SAM" id="MobiDB-lite"/>
    </source>
</evidence>
<evidence type="ECO:0000312" key="2">
    <source>
        <dbReference type="HGNC" id="HGNC:55343"/>
    </source>
</evidence>
<protein>
    <recommendedName>
        <fullName>Uncharacterized protein C17orf114</fullName>
    </recommendedName>
</protein>
<proteinExistence type="predicted"/>
<name>CQ114_HUMAN</name>
<feature type="chain" id="PRO_0000452360" description="Uncharacterized protein C17orf114">
    <location>
        <begin position="1"/>
        <end position="79"/>
    </location>
</feature>
<feature type="region of interest" description="Disordered" evidence="1">
    <location>
        <begin position="20"/>
        <end position="52"/>
    </location>
</feature>
<organism>
    <name type="scientific">Homo sapiens</name>
    <name type="common">Human</name>
    <dbReference type="NCBI Taxonomy" id="9606"/>
    <lineage>
        <taxon>Eukaryota</taxon>
        <taxon>Metazoa</taxon>
        <taxon>Chordata</taxon>
        <taxon>Craniata</taxon>
        <taxon>Vertebrata</taxon>
        <taxon>Euteleostomi</taxon>
        <taxon>Mammalia</taxon>
        <taxon>Eutheria</taxon>
        <taxon>Euarchontoglires</taxon>
        <taxon>Primates</taxon>
        <taxon>Haplorrhini</taxon>
        <taxon>Catarrhini</taxon>
        <taxon>Hominidae</taxon>
        <taxon>Homo</taxon>
    </lineage>
</organism>
<accession>A0A1B0GUV1</accession>